<gene>
    <name evidence="1" type="primary">nanA</name>
    <name type="ordered locus">Ent638_3661</name>
</gene>
<organism>
    <name type="scientific">Enterobacter sp. (strain 638)</name>
    <dbReference type="NCBI Taxonomy" id="399742"/>
    <lineage>
        <taxon>Bacteria</taxon>
        <taxon>Pseudomonadati</taxon>
        <taxon>Pseudomonadota</taxon>
        <taxon>Gammaproteobacteria</taxon>
        <taxon>Enterobacterales</taxon>
        <taxon>Enterobacteriaceae</taxon>
        <taxon>Enterobacter</taxon>
    </lineage>
</organism>
<feature type="chain" id="PRO_1000066928" description="N-acetylneuraminate lyase">
    <location>
        <begin position="1"/>
        <end position="297"/>
    </location>
</feature>
<feature type="active site" description="Proton donor" evidence="1">
    <location>
        <position position="137"/>
    </location>
</feature>
<feature type="active site" description="Schiff-base intermediate with substrate" evidence="1">
    <location>
        <position position="165"/>
    </location>
</feature>
<feature type="binding site" evidence="1">
    <location>
        <position position="47"/>
    </location>
    <ligand>
        <name>aceneuramate</name>
        <dbReference type="ChEBI" id="CHEBI:173083"/>
    </ligand>
</feature>
<feature type="binding site" evidence="1">
    <location>
        <position position="48"/>
    </location>
    <ligand>
        <name>aceneuramate</name>
        <dbReference type="ChEBI" id="CHEBI:173083"/>
    </ligand>
</feature>
<feature type="binding site" evidence="1">
    <location>
        <position position="167"/>
    </location>
    <ligand>
        <name>aceneuramate</name>
        <dbReference type="ChEBI" id="CHEBI:173083"/>
    </ligand>
</feature>
<feature type="binding site" evidence="1">
    <location>
        <position position="189"/>
    </location>
    <ligand>
        <name>aceneuramate</name>
        <dbReference type="ChEBI" id="CHEBI:173083"/>
    </ligand>
</feature>
<feature type="binding site" evidence="1">
    <location>
        <position position="191"/>
    </location>
    <ligand>
        <name>aceneuramate</name>
        <dbReference type="ChEBI" id="CHEBI:173083"/>
    </ligand>
</feature>
<feature type="binding site" evidence="1">
    <location>
        <position position="192"/>
    </location>
    <ligand>
        <name>aceneuramate</name>
        <dbReference type="ChEBI" id="CHEBI:173083"/>
    </ligand>
</feature>
<feature type="binding site" evidence="1">
    <location>
        <position position="208"/>
    </location>
    <ligand>
        <name>aceneuramate</name>
        <dbReference type="ChEBI" id="CHEBI:173083"/>
    </ligand>
</feature>
<evidence type="ECO:0000255" key="1">
    <source>
        <dbReference type="HAMAP-Rule" id="MF_01237"/>
    </source>
</evidence>
<protein>
    <recommendedName>
        <fullName evidence="1">N-acetylneuraminate lyase</fullName>
        <shortName evidence="1">NAL</shortName>
        <shortName evidence="1">Neu5Ac lyase</shortName>
        <ecNumber evidence="1">4.1.3.3</ecNumber>
    </recommendedName>
    <alternativeName>
        <fullName evidence="1">N-acetylneuraminate pyruvate-lyase</fullName>
    </alternativeName>
    <alternativeName>
        <fullName evidence="1">N-acetylneuraminic acid aldolase</fullName>
    </alternativeName>
    <alternativeName>
        <fullName evidence="1">Sialate lyase</fullName>
    </alternativeName>
    <alternativeName>
        <fullName evidence="1">Sialic acid aldolase</fullName>
    </alternativeName>
    <alternativeName>
        <fullName evidence="1">Sialic acid lyase</fullName>
    </alternativeName>
</protein>
<accession>A4WF38</accession>
<reference key="1">
    <citation type="journal article" date="2010" name="PLoS Genet.">
        <title>Genome sequence of the plant growth promoting endophytic bacterium Enterobacter sp. 638.</title>
        <authorList>
            <person name="Taghavi S."/>
            <person name="van der Lelie D."/>
            <person name="Hoffman A."/>
            <person name="Zhang Y.B."/>
            <person name="Walla M.D."/>
            <person name="Vangronsveld J."/>
            <person name="Newman L."/>
            <person name="Monchy S."/>
        </authorList>
    </citation>
    <scope>NUCLEOTIDE SEQUENCE [LARGE SCALE GENOMIC DNA]</scope>
    <source>
        <strain>638</strain>
    </source>
</reference>
<dbReference type="EC" id="4.1.3.3" evidence="1"/>
<dbReference type="EMBL" id="CP000653">
    <property type="protein sequence ID" value="ABP62318.1"/>
    <property type="molecule type" value="Genomic_DNA"/>
</dbReference>
<dbReference type="RefSeq" id="WP_015960642.1">
    <property type="nucleotide sequence ID" value="NC_009436.1"/>
</dbReference>
<dbReference type="SMR" id="A4WF38"/>
<dbReference type="STRING" id="399742.Ent638_3661"/>
<dbReference type="KEGG" id="ent:Ent638_3661"/>
<dbReference type="eggNOG" id="COG0329">
    <property type="taxonomic scope" value="Bacteria"/>
</dbReference>
<dbReference type="HOGENOM" id="CLU_049343_6_0_6"/>
<dbReference type="OrthoDB" id="199953at2"/>
<dbReference type="UniPathway" id="UPA00629">
    <property type="reaction ID" value="UER00680"/>
</dbReference>
<dbReference type="Proteomes" id="UP000000230">
    <property type="component" value="Chromosome"/>
</dbReference>
<dbReference type="GO" id="GO:0005829">
    <property type="term" value="C:cytosol"/>
    <property type="evidence" value="ECO:0007669"/>
    <property type="project" value="TreeGrafter"/>
</dbReference>
<dbReference type="GO" id="GO:0008747">
    <property type="term" value="F:N-acetylneuraminate lyase activity"/>
    <property type="evidence" value="ECO:0007669"/>
    <property type="project" value="UniProtKB-UniRule"/>
</dbReference>
<dbReference type="GO" id="GO:0005975">
    <property type="term" value="P:carbohydrate metabolic process"/>
    <property type="evidence" value="ECO:0007669"/>
    <property type="project" value="UniProtKB-UniRule"/>
</dbReference>
<dbReference type="GO" id="GO:0019262">
    <property type="term" value="P:N-acetylneuraminate catabolic process"/>
    <property type="evidence" value="ECO:0007669"/>
    <property type="project" value="UniProtKB-UniRule"/>
</dbReference>
<dbReference type="CDD" id="cd00954">
    <property type="entry name" value="NAL"/>
    <property type="match status" value="1"/>
</dbReference>
<dbReference type="FunFam" id="3.20.20.70:FF:000039">
    <property type="entry name" value="N-acetylneuraminate lyase"/>
    <property type="match status" value="1"/>
</dbReference>
<dbReference type="Gene3D" id="3.20.20.70">
    <property type="entry name" value="Aldolase class I"/>
    <property type="match status" value="1"/>
</dbReference>
<dbReference type="HAMAP" id="MF_01237">
    <property type="entry name" value="N_acetylneuram_lyase"/>
    <property type="match status" value="1"/>
</dbReference>
<dbReference type="InterPro" id="IPR013785">
    <property type="entry name" value="Aldolase_TIM"/>
</dbReference>
<dbReference type="InterPro" id="IPR002220">
    <property type="entry name" value="DapA-like"/>
</dbReference>
<dbReference type="InterPro" id="IPR005264">
    <property type="entry name" value="NanA"/>
</dbReference>
<dbReference type="InterPro" id="IPR020625">
    <property type="entry name" value="Schiff_base-form_aldolases_AS"/>
</dbReference>
<dbReference type="InterPro" id="IPR020624">
    <property type="entry name" value="Schiff_base-form_aldolases_CS"/>
</dbReference>
<dbReference type="NCBIfam" id="TIGR00683">
    <property type="entry name" value="nanA"/>
    <property type="match status" value="1"/>
</dbReference>
<dbReference type="NCBIfam" id="NF003164">
    <property type="entry name" value="PRK04147.1"/>
    <property type="match status" value="1"/>
</dbReference>
<dbReference type="PANTHER" id="PTHR42849">
    <property type="entry name" value="N-ACETYLNEURAMINATE LYASE"/>
    <property type="match status" value="1"/>
</dbReference>
<dbReference type="PANTHER" id="PTHR42849:SF1">
    <property type="entry name" value="N-ACETYLNEURAMINATE LYASE"/>
    <property type="match status" value="1"/>
</dbReference>
<dbReference type="Pfam" id="PF00701">
    <property type="entry name" value="DHDPS"/>
    <property type="match status" value="1"/>
</dbReference>
<dbReference type="PIRSF" id="PIRSF001365">
    <property type="entry name" value="DHDPS"/>
    <property type="match status" value="1"/>
</dbReference>
<dbReference type="PRINTS" id="PR00146">
    <property type="entry name" value="DHPICSNTHASE"/>
</dbReference>
<dbReference type="SMART" id="SM01130">
    <property type="entry name" value="DHDPS"/>
    <property type="match status" value="1"/>
</dbReference>
<dbReference type="SUPFAM" id="SSF51569">
    <property type="entry name" value="Aldolase"/>
    <property type="match status" value="1"/>
</dbReference>
<dbReference type="PROSITE" id="PS00665">
    <property type="entry name" value="DHDPS_1"/>
    <property type="match status" value="1"/>
</dbReference>
<dbReference type="PROSITE" id="PS00666">
    <property type="entry name" value="DHDPS_2"/>
    <property type="match status" value="1"/>
</dbReference>
<proteinExistence type="inferred from homology"/>
<keyword id="KW-0119">Carbohydrate metabolism</keyword>
<keyword id="KW-0963">Cytoplasm</keyword>
<keyword id="KW-0456">Lyase</keyword>
<keyword id="KW-0704">Schiff base</keyword>
<name>NANA_ENT38</name>
<comment type="function">
    <text evidence="1">Catalyzes the reversible aldol cleavage of N-acetylneuraminic acid (sialic acid; Neu5Ac) to form pyruvate and N-acetylmannosamine (ManNAc) via a Schiff base intermediate.</text>
</comment>
<comment type="catalytic activity">
    <reaction evidence="1">
        <text>aceneuramate = aldehydo-N-acetyl-D-mannosamine + pyruvate</text>
        <dbReference type="Rhea" id="RHEA:23296"/>
        <dbReference type="ChEBI" id="CHEBI:15361"/>
        <dbReference type="ChEBI" id="CHEBI:17122"/>
        <dbReference type="ChEBI" id="CHEBI:173083"/>
        <dbReference type="EC" id="4.1.3.3"/>
    </reaction>
</comment>
<comment type="pathway">
    <text evidence="1">Amino-sugar metabolism; N-acetylneuraminate degradation; D-fructose 6-phosphate from N-acetylneuraminate: step 1/5.</text>
</comment>
<comment type="subunit">
    <text evidence="1">Homotetramer.</text>
</comment>
<comment type="subcellular location">
    <subcellularLocation>
        <location evidence="1">Cytoplasm</location>
    </subcellularLocation>
</comment>
<comment type="similarity">
    <text evidence="1">Belongs to the DapA family. NanA subfamily.</text>
</comment>
<sequence>MAKQLRGVMAALLTPFNTQQALDKESLRRLVQFNMQQGIDGLYVGGSTGEAFVQSLSEREQVLEIVAEEAKGKITLIAHVGCVSTAESQQLAASASRFGFDAVSAVTPFYYPFSFEEHCDHYRAIIDSADGLPMVVYNIPALSGVKLTLDQINTLVTLPGVGALKQTSGDLFQMEQIRRAHPDLVLYNGYDEIFASGLLAGADGGIGSTYNIMGWRYQAIAKAIREGDNATAQRLQSECNKVIDLLIKVGVFRGLKTVLHYMDVVSVPLCRKPFAPVAEPYLPELKALAKQLMVEKA</sequence>